<accession>Q9Y2V3</accession>
<accession>Q86V11</accession>
<reference key="1">
    <citation type="journal article" date="2000" name="J. Biol. Chem.">
        <title>Both PCE-1/RX and OTX/CRX interactions are necessary for photoreceptor-specific gene expression.</title>
        <authorList>
            <person name="Kimura A."/>
            <person name="Singh D."/>
            <person name="Wawrousek E.F."/>
            <person name="Kikuchi M."/>
            <person name="Nakamura M."/>
            <person name="Shinohara T."/>
        </authorList>
    </citation>
    <scope>NUCLEOTIDE SEQUENCE [MRNA] (ISOFORM 1)</scope>
    <source>
        <tissue>Retina</tissue>
    </source>
</reference>
<reference key="2">
    <citation type="journal article" date="2011" name="Invest. Ophthalmol. Vis. Sci.">
        <title>Full-length transcriptome analysis of human retina-derived cell lines ARPE-19 and Y79 using the vector-capping method.</title>
        <authorList>
            <person name="Oshikawa M."/>
            <person name="Tsutsui C."/>
            <person name="Ikegami T."/>
            <person name="Fuchida Y."/>
            <person name="Matsubara M."/>
            <person name="Toyama S."/>
            <person name="Usami R."/>
            <person name="Ohtoko K."/>
            <person name="Kato S."/>
        </authorList>
    </citation>
    <scope>NUCLEOTIDE SEQUENCE [LARGE SCALE MRNA] (ISOFORM 2)</scope>
    <source>
        <tissue>Retinoblastoma</tissue>
    </source>
</reference>
<reference key="3">
    <citation type="journal article" date="2005" name="Nature">
        <title>DNA sequence and analysis of human chromosome 18.</title>
        <authorList>
            <person name="Nusbaum C."/>
            <person name="Zody M.C."/>
            <person name="Borowsky M.L."/>
            <person name="Kamal M."/>
            <person name="Kodira C.D."/>
            <person name="Taylor T.D."/>
            <person name="Whittaker C.A."/>
            <person name="Chang J.L."/>
            <person name="Cuomo C.A."/>
            <person name="Dewar K."/>
            <person name="FitzGerald M.G."/>
            <person name="Yang X."/>
            <person name="Abouelleil A."/>
            <person name="Allen N.R."/>
            <person name="Anderson S."/>
            <person name="Bloom T."/>
            <person name="Bugalter B."/>
            <person name="Butler J."/>
            <person name="Cook A."/>
            <person name="DeCaprio D."/>
            <person name="Engels R."/>
            <person name="Garber M."/>
            <person name="Gnirke A."/>
            <person name="Hafez N."/>
            <person name="Hall J.L."/>
            <person name="Norman C.H."/>
            <person name="Itoh T."/>
            <person name="Jaffe D.B."/>
            <person name="Kuroki Y."/>
            <person name="Lehoczky J."/>
            <person name="Lui A."/>
            <person name="Macdonald P."/>
            <person name="Mauceli E."/>
            <person name="Mikkelsen T.S."/>
            <person name="Naylor J.W."/>
            <person name="Nicol R."/>
            <person name="Nguyen C."/>
            <person name="Noguchi H."/>
            <person name="O'Leary S.B."/>
            <person name="Piqani B."/>
            <person name="Smith C.L."/>
            <person name="Talamas J.A."/>
            <person name="Topham K."/>
            <person name="Totoki Y."/>
            <person name="Toyoda A."/>
            <person name="Wain H.M."/>
            <person name="Young S.K."/>
            <person name="Zeng Q."/>
            <person name="Zimmer A.R."/>
            <person name="Fujiyama A."/>
            <person name="Hattori M."/>
            <person name="Birren B.W."/>
            <person name="Sakaki Y."/>
            <person name="Lander E.S."/>
        </authorList>
    </citation>
    <scope>NUCLEOTIDE SEQUENCE [LARGE SCALE GENOMIC DNA]</scope>
</reference>
<reference key="4">
    <citation type="journal article" date="2004" name="Genome Res.">
        <title>The status, quality, and expansion of the NIH full-length cDNA project: the Mammalian Gene Collection (MGC).</title>
        <authorList>
            <consortium name="The MGC Project Team"/>
        </authorList>
    </citation>
    <scope>NUCLEOTIDE SEQUENCE [LARGE SCALE MRNA] (ISOFORM 2)</scope>
    <source>
        <tissue>Eye</tissue>
    </source>
</reference>
<reference key="5">
    <citation type="journal article" date="2004" name="Hum. Mol. Genet.">
        <title>Mutations in the human RAX homeobox gene in a patient with anophthalmia and sclerocornea.</title>
        <authorList>
            <person name="Voronina V.A."/>
            <person name="Kozhemyakina E.A."/>
            <person name="O'Kernick C.M."/>
            <person name="Kahn N.D."/>
            <person name="Wenger S.L."/>
            <person name="Linberg J.V."/>
            <person name="Schneider A.S."/>
            <person name="Mathers P.H."/>
        </authorList>
    </citation>
    <scope>VARIANT MCOPS16 GLN-192</scope>
    <scope>VARIANT GLU-44</scope>
    <scope>CHARACTERIZATION OF VARIANT GLU-44</scope>
    <scope>CHARACTERIZATION OF VARIANT MCOPS16 GLN-192</scope>
</reference>
<reference key="6">
    <citation type="journal article" date="2014" name="Clin. Genet.">
        <title>Molecular findings and clinical data in a cohort of 150 patients with anophthalmia/microphthalmia.</title>
        <authorList>
            <person name="Chassaing N."/>
            <person name="Causse A."/>
            <person name="Vigouroux A."/>
            <person name="Delahaye A."/>
            <person name="Alessandri J.L."/>
            <person name="Boespflug-Tanguy O."/>
            <person name="Boute-Benejean O."/>
            <person name="Dollfus H."/>
            <person name="Duban-Bedu B."/>
            <person name="Gilbert-Dussardier B."/>
            <person name="Giuliano F."/>
            <person name="Gonzales M."/>
            <person name="Holder-Espinasse M."/>
            <person name="Isidor B."/>
            <person name="Jacquemont M.L."/>
            <person name="Lacombe D."/>
            <person name="Martin-Coignard D."/>
            <person name="Mathieu-Dramard M."/>
            <person name="Odent S."/>
            <person name="Picone O."/>
            <person name="Pinson L."/>
            <person name="Quelin C."/>
            <person name="Sigaudy S."/>
            <person name="Toutain A."/>
            <person name="Thauvin-Robinet C."/>
            <person name="Kaplan J."/>
            <person name="Calvas P."/>
        </authorList>
    </citation>
    <scope>VARIANTS MCOPS16 HIS-160; GLN-187 AND GLN-188</scope>
</reference>
<feature type="chain" id="PRO_0000049276" description="Retinal homeobox protein Rx">
    <location>
        <begin position="1"/>
        <end position="346"/>
    </location>
</feature>
<feature type="DNA-binding region" description="Homeobox" evidence="2">
    <location>
        <begin position="136"/>
        <end position="195"/>
    </location>
</feature>
<feature type="region of interest" description="Disordered" evidence="4">
    <location>
        <begin position="46"/>
        <end position="145"/>
    </location>
</feature>
<feature type="region of interest" description="Disordered" evidence="4">
    <location>
        <begin position="194"/>
        <end position="318"/>
    </location>
</feature>
<feature type="short sequence motif" description="Octapeptide motif">
    <location>
        <begin position="33"/>
        <end position="40"/>
    </location>
</feature>
<feature type="short sequence motif" description="OAR" evidence="3">
    <location>
        <begin position="323"/>
        <end position="336"/>
    </location>
</feature>
<feature type="short sequence motif" description="Nuclear localization signal" evidence="1">
    <location>
        <begin position="329"/>
        <end position="333"/>
    </location>
</feature>
<feature type="compositionally biased region" description="Basic and acidic residues" evidence="4">
    <location>
        <begin position="55"/>
        <end position="67"/>
    </location>
</feature>
<feature type="compositionally biased region" description="Pro residues" evidence="4">
    <location>
        <begin position="83"/>
        <end position="92"/>
    </location>
</feature>
<feature type="compositionally biased region" description="Low complexity" evidence="4">
    <location>
        <begin position="207"/>
        <end position="225"/>
    </location>
</feature>
<feature type="compositionally biased region" description="Gly residues" evidence="4">
    <location>
        <begin position="226"/>
        <end position="236"/>
    </location>
</feature>
<feature type="compositionally biased region" description="Low complexity" evidence="4">
    <location>
        <begin position="237"/>
        <end position="246"/>
    </location>
</feature>
<feature type="compositionally biased region" description="Pro residues" evidence="4">
    <location>
        <begin position="274"/>
        <end position="304"/>
    </location>
</feature>
<feature type="splice variant" id="VSP_053558" description="In isoform 2." evidence="7 8">
    <original>APRPYCPK</original>
    <variation>GVVPEPTG</variation>
    <location>
        <begin position="97"/>
        <end position="104"/>
    </location>
</feature>
<feature type="splice variant" id="VSP_053559" description="In isoform 2." evidence="7 8">
    <location>
        <begin position="105"/>
        <end position="346"/>
    </location>
</feature>
<feature type="sequence variant" id="VAR_020150" description="In dbSNP:rs2271733." evidence="5">
    <original>D</original>
    <variation>E</variation>
    <location>
        <position position="44"/>
    </location>
</feature>
<feature type="sequence variant" id="VAR_075630" description="In MCOPS16; uncertain significance." evidence="6">
    <original>Y</original>
    <variation>H</variation>
    <location>
        <position position="160"/>
    </location>
</feature>
<feature type="sequence variant" id="VAR_075631" description="In MCOPS16; uncertain significance; dbSNP:rs2070316408." evidence="6">
    <original>R</original>
    <variation>Q</variation>
    <location>
        <position position="187"/>
    </location>
</feature>
<feature type="sequence variant" id="VAR_075632" description="In MCOPS16; uncertain significance." evidence="6">
    <original>R</original>
    <variation>Q</variation>
    <location>
        <position position="188"/>
    </location>
</feature>
<feature type="sequence variant" id="VAR_034905" description="In MCOPS16; does not affect nuclear localization; reduces DNA binding activity; dbSNP:rs121909127." evidence="5">
    <original>R</original>
    <variation>Q</variation>
    <location>
        <position position="192"/>
    </location>
</feature>
<feature type="sequence conflict" description="In Ref. 1; AAD23438." evidence="9" ref="1">
    <original>G</original>
    <variation>W</variation>
    <location>
        <position position="107"/>
    </location>
</feature>
<organism>
    <name type="scientific">Homo sapiens</name>
    <name type="common">Human</name>
    <dbReference type="NCBI Taxonomy" id="9606"/>
    <lineage>
        <taxon>Eukaryota</taxon>
        <taxon>Metazoa</taxon>
        <taxon>Chordata</taxon>
        <taxon>Craniata</taxon>
        <taxon>Vertebrata</taxon>
        <taxon>Euteleostomi</taxon>
        <taxon>Mammalia</taxon>
        <taxon>Eutheria</taxon>
        <taxon>Euarchontoglires</taxon>
        <taxon>Primates</taxon>
        <taxon>Haplorrhini</taxon>
        <taxon>Catarrhini</taxon>
        <taxon>Hominidae</taxon>
        <taxon>Homo</taxon>
    </lineage>
</organism>
<proteinExistence type="evidence at protein level"/>
<keyword id="KW-0025">Alternative splicing</keyword>
<keyword id="KW-0217">Developmental protein</keyword>
<keyword id="KW-0225">Disease variant</keyword>
<keyword id="KW-0238">DNA-binding</keyword>
<keyword id="KW-0371">Homeobox</keyword>
<keyword id="KW-1013">Microphthalmia</keyword>
<keyword id="KW-0539">Nucleus</keyword>
<keyword id="KW-1267">Proteomics identification</keyword>
<keyword id="KW-1185">Reference proteome</keyword>
<keyword id="KW-0804">Transcription</keyword>
<keyword id="KW-0805">Transcription regulation</keyword>
<protein>
    <recommendedName>
        <fullName>Retinal homeobox protein Rx</fullName>
    </recommendedName>
    <alternativeName>
        <fullName>Retina and anterior neural fold homeobox protein</fullName>
    </alternativeName>
</protein>
<comment type="function">
    <text>Plays a critical role in eye formation by regulating the initial specification of retinal cells and/or their subsequent proliferation. Binds to the photoreceptor conserved element-I (PCE-1/Ret 1) in the photoreceptor cell-specific arrestin promoter.</text>
</comment>
<comment type="subcellular location">
    <subcellularLocation>
        <location>Nucleus</location>
    </subcellularLocation>
</comment>
<comment type="alternative products">
    <event type="alternative splicing"/>
    <isoform>
        <id>Q9Y2V3-1</id>
        <name>1</name>
        <sequence type="displayed"/>
    </isoform>
    <isoform>
        <id>Q9Y2V3-2</id>
        <name>2</name>
        <sequence type="described" ref="VSP_053558 VSP_053559"/>
    </isoform>
</comment>
<comment type="tissue specificity">
    <text>Expressed in the developing eye and weakly expressed in the adult retina.</text>
</comment>
<comment type="disease" evidence="5 6">
    <disease id="DI-00756">
        <name>Microphthalmia, syndromic 16</name>
        <acronym>MCOPS16</acronym>
        <description>An autosomal recessive disorder of eye formation, ranging from small size of a single eye to complete bilateral absence of ocular tissues. Ocular abnormalities like opacities of the cornea and lens, scaring of the retina and choroid, and other abnormalities may also be present. Some patients exhibit developmental delay and intellectual disability or autism.</description>
        <dbReference type="MIM" id="611038"/>
    </disease>
    <text>The disease is caused by variants affecting the gene represented in this entry.</text>
</comment>
<comment type="similarity">
    <text evidence="9">Belongs to the paired homeobox family. Bicoid subfamily.</text>
</comment>
<evidence type="ECO:0000255" key="1"/>
<evidence type="ECO:0000255" key="2">
    <source>
        <dbReference type="PROSITE-ProRule" id="PRU00108"/>
    </source>
</evidence>
<evidence type="ECO:0000255" key="3">
    <source>
        <dbReference type="PROSITE-ProRule" id="PRU00138"/>
    </source>
</evidence>
<evidence type="ECO:0000256" key="4">
    <source>
        <dbReference type="SAM" id="MobiDB-lite"/>
    </source>
</evidence>
<evidence type="ECO:0000269" key="5">
    <source>
    </source>
</evidence>
<evidence type="ECO:0000269" key="6">
    <source>
    </source>
</evidence>
<evidence type="ECO:0000303" key="7">
    <source>
    </source>
</evidence>
<evidence type="ECO:0000303" key="8">
    <source>
    </source>
</evidence>
<evidence type="ECO:0000305" key="9"/>
<sequence>MHLPGCAPAMADGSFSLAGHLLRSPGGSTSRLHSIEAILGFTKDDGILGTFPAERGARGAKERDRRLGARPACPKAPEEGSEPSPPPAPAPAPEYEAPRPYCPKEPGEARPSPGLPVGPATGEAKLSEEEQPKKKHRRNRTTFTTYQLHELERAFEKSHYPDVYSREELAGKVNLPEVRVQVWFQNRRAKWRRQEKLEVSSMKLQDSPLLSFSRSPPSATLSPLGAGPGSGGGPAGGALPLESWLGPPLPGGGATALQSLPGFGPPAQSLPASYTPPPPPPPFLNSPPLGPGLQPLAPPPPSYPCGPGFGDKFPLDEADPRNSSIAALRLKAKEHIQAIGKPWQAL</sequence>
<dbReference type="EMBL" id="AF115392">
    <property type="protein sequence ID" value="AAD23438.1"/>
    <property type="molecule type" value="mRNA"/>
</dbReference>
<dbReference type="EMBL" id="AB593018">
    <property type="protein sequence ID" value="BAJ83973.1"/>
    <property type="molecule type" value="mRNA"/>
</dbReference>
<dbReference type="EMBL" id="AC067859">
    <property type="status" value="NOT_ANNOTATED_CDS"/>
    <property type="molecule type" value="Genomic_DNA"/>
</dbReference>
<dbReference type="EMBL" id="BC051901">
    <property type="protein sequence ID" value="AAH51901.1"/>
    <property type="molecule type" value="mRNA"/>
</dbReference>
<dbReference type="CCDS" id="CCDS11972.1">
    <molecule id="Q9Y2V3-1"/>
</dbReference>
<dbReference type="RefSeq" id="NP_038463.2">
    <molecule id="Q9Y2V3-1"/>
    <property type="nucleotide sequence ID" value="NM_013435.3"/>
</dbReference>
<dbReference type="SMR" id="Q9Y2V3"/>
<dbReference type="BioGRID" id="119034">
    <property type="interactions" value="9"/>
</dbReference>
<dbReference type="FunCoup" id="Q9Y2V3">
    <property type="interactions" value="197"/>
</dbReference>
<dbReference type="IntAct" id="Q9Y2V3">
    <property type="interactions" value="1"/>
</dbReference>
<dbReference type="STRING" id="9606.ENSP00000334813"/>
<dbReference type="iPTMnet" id="Q9Y2V3"/>
<dbReference type="PhosphoSitePlus" id="Q9Y2V3"/>
<dbReference type="BioMuta" id="RAX"/>
<dbReference type="DMDM" id="296452886"/>
<dbReference type="jPOST" id="Q9Y2V3"/>
<dbReference type="MassIVE" id="Q9Y2V3"/>
<dbReference type="PaxDb" id="9606-ENSP00000334813"/>
<dbReference type="PeptideAtlas" id="Q9Y2V3"/>
<dbReference type="ProteomicsDB" id="69944"/>
<dbReference type="ProteomicsDB" id="85910">
    <molecule id="Q9Y2V3-1"/>
</dbReference>
<dbReference type="Antibodypedia" id="9851">
    <property type="antibodies" value="297 antibodies from 23 providers"/>
</dbReference>
<dbReference type="DNASU" id="30062"/>
<dbReference type="Ensembl" id="ENST00000256852.7">
    <molecule id="Q9Y2V3-2"/>
    <property type="protein sequence ID" value="ENSP00000256852.7"/>
    <property type="gene ID" value="ENSG00000134438.10"/>
</dbReference>
<dbReference type="Ensembl" id="ENST00000334889.4">
    <molecule id="Q9Y2V3-1"/>
    <property type="protein sequence ID" value="ENSP00000334813.3"/>
    <property type="gene ID" value="ENSG00000134438.10"/>
</dbReference>
<dbReference type="GeneID" id="30062"/>
<dbReference type="KEGG" id="hsa:30062"/>
<dbReference type="MANE-Select" id="ENST00000334889.4">
    <property type="protein sequence ID" value="ENSP00000334813.3"/>
    <property type="RefSeq nucleotide sequence ID" value="NM_013435.3"/>
    <property type="RefSeq protein sequence ID" value="NP_038463.2"/>
</dbReference>
<dbReference type="UCSC" id="uc002lhx.3">
    <molecule id="Q9Y2V3-1"/>
    <property type="organism name" value="human"/>
</dbReference>
<dbReference type="AGR" id="HGNC:18662"/>
<dbReference type="CTD" id="30062"/>
<dbReference type="DisGeNET" id="30062"/>
<dbReference type="GeneCards" id="RAX"/>
<dbReference type="HGNC" id="HGNC:18662">
    <property type="gene designation" value="RAX"/>
</dbReference>
<dbReference type="HPA" id="ENSG00000134438">
    <property type="expression patterns" value="Group enriched (pituitary gland, retina)"/>
</dbReference>
<dbReference type="MalaCards" id="RAX"/>
<dbReference type="MIM" id="601881">
    <property type="type" value="gene"/>
</dbReference>
<dbReference type="MIM" id="611038">
    <property type="type" value="phenotype"/>
</dbReference>
<dbReference type="neXtProt" id="NX_Q9Y2V3"/>
<dbReference type="OpenTargets" id="ENSG00000134438"/>
<dbReference type="Orphanet" id="98938">
    <property type="disease" value="Colobomatous microphthalmia"/>
</dbReference>
<dbReference type="Orphanet" id="35612">
    <property type="disease" value="Nanophthalmos"/>
</dbReference>
<dbReference type="PharmGKB" id="PA38626"/>
<dbReference type="VEuPathDB" id="HostDB:ENSG00000134438"/>
<dbReference type="eggNOG" id="KOG0490">
    <property type="taxonomic scope" value="Eukaryota"/>
</dbReference>
<dbReference type="GeneTree" id="ENSGT00940000162144"/>
<dbReference type="HOGENOM" id="CLU_047013_2_0_1"/>
<dbReference type="InParanoid" id="Q9Y2V3"/>
<dbReference type="OMA" id="VMMMDER"/>
<dbReference type="OrthoDB" id="6159439at2759"/>
<dbReference type="PAN-GO" id="Q9Y2V3">
    <property type="GO annotations" value="3 GO annotations based on evolutionary models"/>
</dbReference>
<dbReference type="PhylomeDB" id="Q9Y2V3"/>
<dbReference type="TreeFam" id="TF315976"/>
<dbReference type="PathwayCommons" id="Q9Y2V3"/>
<dbReference type="SignaLink" id="Q9Y2V3"/>
<dbReference type="BioGRID-ORCS" id="30062">
    <property type="hits" value="11 hits in 1173 CRISPR screens"/>
</dbReference>
<dbReference type="ChiTaRS" id="RAX">
    <property type="organism name" value="human"/>
</dbReference>
<dbReference type="GenomeRNAi" id="30062"/>
<dbReference type="Pharos" id="Q9Y2V3">
    <property type="development level" value="Tbio"/>
</dbReference>
<dbReference type="PRO" id="PR:Q9Y2V3"/>
<dbReference type="Proteomes" id="UP000005640">
    <property type="component" value="Chromosome 18"/>
</dbReference>
<dbReference type="RNAct" id="Q9Y2V3">
    <property type="molecule type" value="protein"/>
</dbReference>
<dbReference type="Bgee" id="ENSG00000134438">
    <property type="expression patterns" value="Expressed in neuron projection bundle connecting eye with brain and 20 other cell types or tissues"/>
</dbReference>
<dbReference type="ExpressionAtlas" id="Q9Y2V3">
    <property type="expression patterns" value="baseline and differential"/>
</dbReference>
<dbReference type="GO" id="GO:0000785">
    <property type="term" value="C:chromatin"/>
    <property type="evidence" value="ECO:0000247"/>
    <property type="project" value="NTNU_SB"/>
</dbReference>
<dbReference type="GO" id="GO:0005634">
    <property type="term" value="C:nucleus"/>
    <property type="evidence" value="ECO:0007669"/>
    <property type="project" value="UniProtKB-SubCell"/>
</dbReference>
<dbReference type="GO" id="GO:0001228">
    <property type="term" value="F:DNA-binding transcription activator activity, RNA polymerase II-specific"/>
    <property type="evidence" value="ECO:0000314"/>
    <property type="project" value="NTNU_SB"/>
</dbReference>
<dbReference type="GO" id="GO:0000981">
    <property type="term" value="F:DNA-binding transcription factor activity, RNA polymerase II-specific"/>
    <property type="evidence" value="ECO:0000247"/>
    <property type="project" value="NTNU_SB"/>
</dbReference>
<dbReference type="GO" id="GO:0000978">
    <property type="term" value="F:RNA polymerase II cis-regulatory region sequence-specific DNA binding"/>
    <property type="evidence" value="ECO:0000314"/>
    <property type="project" value="NTNU_SB"/>
</dbReference>
<dbReference type="GO" id="GO:1990837">
    <property type="term" value="F:sequence-specific double-stranded DNA binding"/>
    <property type="evidence" value="ECO:0000314"/>
    <property type="project" value="ARUK-UCL"/>
</dbReference>
<dbReference type="GO" id="GO:0043010">
    <property type="term" value="P:camera-type eye development"/>
    <property type="evidence" value="ECO:0007669"/>
    <property type="project" value="Ensembl"/>
</dbReference>
<dbReference type="GO" id="GO:0021854">
    <property type="term" value="P:hypothalamus development"/>
    <property type="evidence" value="ECO:0007669"/>
    <property type="project" value="Ensembl"/>
</dbReference>
<dbReference type="GO" id="GO:0060173">
    <property type="term" value="P:limb development"/>
    <property type="evidence" value="ECO:0007669"/>
    <property type="project" value="Ensembl"/>
</dbReference>
<dbReference type="GO" id="GO:0007389">
    <property type="term" value="P:pattern specification process"/>
    <property type="evidence" value="ECO:0007669"/>
    <property type="project" value="Ensembl"/>
</dbReference>
<dbReference type="GO" id="GO:0045944">
    <property type="term" value="P:positive regulation of transcription by RNA polymerase II"/>
    <property type="evidence" value="ECO:0000314"/>
    <property type="project" value="NTNU_SB"/>
</dbReference>
<dbReference type="GO" id="GO:0006357">
    <property type="term" value="P:regulation of transcription by RNA polymerase II"/>
    <property type="evidence" value="ECO:0000318"/>
    <property type="project" value="GO_Central"/>
</dbReference>
<dbReference type="GO" id="GO:0007601">
    <property type="term" value="P:visual perception"/>
    <property type="evidence" value="ECO:0000304"/>
    <property type="project" value="ProtInc"/>
</dbReference>
<dbReference type="CDD" id="cd00086">
    <property type="entry name" value="homeodomain"/>
    <property type="match status" value="1"/>
</dbReference>
<dbReference type="FunFam" id="1.10.10.60:FF:000071">
    <property type="entry name" value="Retinal homeobox gene 2"/>
    <property type="match status" value="1"/>
</dbReference>
<dbReference type="Gene3D" id="1.10.10.60">
    <property type="entry name" value="Homeodomain-like"/>
    <property type="match status" value="1"/>
</dbReference>
<dbReference type="InterPro" id="IPR001356">
    <property type="entry name" value="HD"/>
</dbReference>
<dbReference type="InterPro" id="IPR017970">
    <property type="entry name" value="Homeobox_CS"/>
</dbReference>
<dbReference type="InterPro" id="IPR009057">
    <property type="entry name" value="Homeodomain-like_sf"/>
</dbReference>
<dbReference type="InterPro" id="IPR003654">
    <property type="entry name" value="OAR_dom"/>
</dbReference>
<dbReference type="InterPro" id="IPR043562">
    <property type="entry name" value="RAX/RAX2"/>
</dbReference>
<dbReference type="PANTHER" id="PTHR46271">
    <property type="entry name" value="HOMEOBOX PROTEIN, PUTATIVE-RELATED"/>
    <property type="match status" value="1"/>
</dbReference>
<dbReference type="PANTHER" id="PTHR46271:SF3">
    <property type="entry name" value="RETINAL HOMEOBOX PROTEIN RX"/>
    <property type="match status" value="1"/>
</dbReference>
<dbReference type="Pfam" id="PF00046">
    <property type="entry name" value="Homeodomain"/>
    <property type="match status" value="1"/>
</dbReference>
<dbReference type="Pfam" id="PF03826">
    <property type="entry name" value="OAR"/>
    <property type="match status" value="1"/>
</dbReference>
<dbReference type="SMART" id="SM00389">
    <property type="entry name" value="HOX"/>
    <property type="match status" value="1"/>
</dbReference>
<dbReference type="SUPFAM" id="SSF46689">
    <property type="entry name" value="Homeodomain-like"/>
    <property type="match status" value="1"/>
</dbReference>
<dbReference type="PROSITE" id="PS00027">
    <property type="entry name" value="HOMEOBOX_1"/>
    <property type="match status" value="1"/>
</dbReference>
<dbReference type="PROSITE" id="PS50071">
    <property type="entry name" value="HOMEOBOX_2"/>
    <property type="match status" value="1"/>
</dbReference>
<dbReference type="PROSITE" id="PS50803">
    <property type="entry name" value="OAR"/>
    <property type="match status" value="1"/>
</dbReference>
<name>RX_HUMAN</name>
<gene>
    <name type="primary">RAX</name>
    <name type="synonym">RX</name>
</gene>